<feature type="chain" id="PRO_0000068050" description="Dihydrolipoyl dehydrogenase">
    <location>
        <begin position="1"/>
        <end position="468"/>
    </location>
</feature>
<feature type="active site" description="Proton acceptor" evidence="1">
    <location>
        <position position="446"/>
    </location>
</feature>
<feature type="binding site" evidence="1">
    <location>
        <begin position="39"/>
        <end position="47"/>
    </location>
    <ligand>
        <name>FAD</name>
        <dbReference type="ChEBI" id="CHEBI:57692"/>
    </ligand>
</feature>
<feature type="binding site" evidence="1">
    <location>
        <position position="56"/>
    </location>
    <ligand>
        <name>FAD</name>
        <dbReference type="ChEBI" id="CHEBI:57692"/>
    </ligand>
</feature>
<feature type="binding site" evidence="1">
    <location>
        <position position="119"/>
    </location>
    <ligand>
        <name>FAD</name>
        <dbReference type="ChEBI" id="CHEBI:57692"/>
    </ligand>
</feature>
<feature type="binding site" evidence="1">
    <location>
        <begin position="183"/>
        <end position="187"/>
    </location>
    <ligand>
        <name>NAD(+)</name>
        <dbReference type="ChEBI" id="CHEBI:57540"/>
    </ligand>
</feature>
<feature type="binding site" evidence="1">
    <location>
        <position position="206"/>
    </location>
    <ligand>
        <name>NAD(+)</name>
        <dbReference type="ChEBI" id="CHEBI:57540"/>
    </ligand>
</feature>
<feature type="binding site" evidence="1">
    <location>
        <begin position="271"/>
        <end position="274"/>
    </location>
    <ligand>
        <name>NAD(+)</name>
        <dbReference type="ChEBI" id="CHEBI:57540"/>
    </ligand>
</feature>
<feature type="binding site" evidence="1">
    <location>
        <position position="314"/>
    </location>
    <ligand>
        <name>FAD</name>
        <dbReference type="ChEBI" id="CHEBI:57692"/>
    </ligand>
</feature>
<feature type="binding site" evidence="1">
    <location>
        <position position="322"/>
    </location>
    <ligand>
        <name>FAD</name>
        <dbReference type="ChEBI" id="CHEBI:57692"/>
    </ligand>
</feature>
<feature type="disulfide bond" description="Redox-active" evidence="1">
    <location>
        <begin position="47"/>
        <end position="52"/>
    </location>
</feature>
<protein>
    <recommendedName>
        <fullName>Dihydrolipoyl dehydrogenase</fullName>
        <ecNumber>1.8.1.4</ecNumber>
    </recommendedName>
    <alternativeName>
        <fullName>Dihydrolipoamide dehydrogenase</fullName>
    </alternativeName>
    <alternativeName>
        <fullName>E3 component of pyruvate complex</fullName>
    </alternativeName>
    <alternativeName>
        <fullName>Membrane-bound ribosome protein complex 50 kDa subunit</fullName>
    </alternativeName>
</protein>
<proteinExistence type="inferred from homology"/>
<dbReference type="EC" id="1.8.1.4"/>
<dbReference type="EMBL" id="X58434">
    <property type="protein sequence ID" value="CAA41340.1"/>
    <property type="molecule type" value="Genomic_DNA"/>
</dbReference>
<dbReference type="PIR" id="S19723">
    <property type="entry name" value="S19723"/>
</dbReference>
<dbReference type="SMR" id="P0A0E8"/>
<dbReference type="OMA" id="CAQLGMK"/>
<dbReference type="OrthoDB" id="9800167at2"/>
<dbReference type="GO" id="GO:0005737">
    <property type="term" value="C:cytoplasm"/>
    <property type="evidence" value="ECO:0007669"/>
    <property type="project" value="UniProtKB-SubCell"/>
</dbReference>
<dbReference type="GO" id="GO:0016020">
    <property type="term" value="C:membrane"/>
    <property type="evidence" value="ECO:0007669"/>
    <property type="project" value="UniProtKB-SubCell"/>
</dbReference>
<dbReference type="GO" id="GO:0004148">
    <property type="term" value="F:dihydrolipoyl dehydrogenase (NADH) activity"/>
    <property type="evidence" value="ECO:0007669"/>
    <property type="project" value="UniProtKB-EC"/>
</dbReference>
<dbReference type="GO" id="GO:0050660">
    <property type="term" value="F:flavin adenine dinucleotide binding"/>
    <property type="evidence" value="ECO:0007669"/>
    <property type="project" value="InterPro"/>
</dbReference>
<dbReference type="GO" id="GO:0006103">
    <property type="term" value="P:2-oxoglutarate metabolic process"/>
    <property type="evidence" value="ECO:0007669"/>
    <property type="project" value="TreeGrafter"/>
</dbReference>
<dbReference type="FunFam" id="3.30.390.30:FF:000001">
    <property type="entry name" value="Dihydrolipoyl dehydrogenase"/>
    <property type="match status" value="1"/>
</dbReference>
<dbReference type="FunFam" id="3.50.50.60:FF:000037">
    <property type="entry name" value="Dihydrolipoyl dehydrogenase"/>
    <property type="match status" value="1"/>
</dbReference>
<dbReference type="Gene3D" id="3.30.390.30">
    <property type="match status" value="1"/>
</dbReference>
<dbReference type="Gene3D" id="3.50.50.60">
    <property type="entry name" value="FAD/NAD(P)-binding domain"/>
    <property type="match status" value="2"/>
</dbReference>
<dbReference type="InterPro" id="IPR050151">
    <property type="entry name" value="Class-I_Pyr_Nuc-Dis_Oxidored"/>
</dbReference>
<dbReference type="InterPro" id="IPR036188">
    <property type="entry name" value="FAD/NAD-bd_sf"/>
</dbReference>
<dbReference type="InterPro" id="IPR023753">
    <property type="entry name" value="FAD/NAD-binding_dom"/>
</dbReference>
<dbReference type="InterPro" id="IPR016156">
    <property type="entry name" value="FAD/NAD-linked_Rdtase_dimer_sf"/>
</dbReference>
<dbReference type="InterPro" id="IPR006258">
    <property type="entry name" value="Lipoamide_DH"/>
</dbReference>
<dbReference type="InterPro" id="IPR001100">
    <property type="entry name" value="Pyr_nuc-diS_OxRdtase"/>
</dbReference>
<dbReference type="InterPro" id="IPR004099">
    <property type="entry name" value="Pyr_nucl-diS_OxRdtase_dimer"/>
</dbReference>
<dbReference type="InterPro" id="IPR012999">
    <property type="entry name" value="Pyr_OxRdtase_I_AS"/>
</dbReference>
<dbReference type="NCBIfam" id="TIGR01350">
    <property type="entry name" value="lipoamide_DH"/>
    <property type="match status" value="1"/>
</dbReference>
<dbReference type="PANTHER" id="PTHR22912:SF160">
    <property type="entry name" value="DIHYDROLIPOYL DEHYDROGENASE"/>
    <property type="match status" value="1"/>
</dbReference>
<dbReference type="PANTHER" id="PTHR22912">
    <property type="entry name" value="DISULFIDE OXIDOREDUCTASE"/>
    <property type="match status" value="1"/>
</dbReference>
<dbReference type="Pfam" id="PF07992">
    <property type="entry name" value="Pyr_redox_2"/>
    <property type="match status" value="1"/>
</dbReference>
<dbReference type="Pfam" id="PF02852">
    <property type="entry name" value="Pyr_redox_dim"/>
    <property type="match status" value="1"/>
</dbReference>
<dbReference type="PIRSF" id="PIRSF000350">
    <property type="entry name" value="Mercury_reductase_MerA"/>
    <property type="match status" value="1"/>
</dbReference>
<dbReference type="PRINTS" id="PR00368">
    <property type="entry name" value="FADPNR"/>
</dbReference>
<dbReference type="PRINTS" id="PR00411">
    <property type="entry name" value="PNDRDTASEI"/>
</dbReference>
<dbReference type="SUPFAM" id="SSF51905">
    <property type="entry name" value="FAD/NAD(P)-binding domain"/>
    <property type="match status" value="1"/>
</dbReference>
<dbReference type="SUPFAM" id="SSF55424">
    <property type="entry name" value="FAD/NAD-linked reductases, dimerisation (C-terminal) domain"/>
    <property type="match status" value="1"/>
</dbReference>
<dbReference type="PROSITE" id="PS00076">
    <property type="entry name" value="PYRIDINE_REDOX_1"/>
    <property type="match status" value="1"/>
</dbReference>
<organism>
    <name type="scientific">Staphylococcus aureus</name>
    <dbReference type="NCBI Taxonomy" id="1280"/>
    <lineage>
        <taxon>Bacteria</taxon>
        <taxon>Bacillati</taxon>
        <taxon>Bacillota</taxon>
        <taxon>Bacilli</taxon>
        <taxon>Bacillales</taxon>
        <taxon>Staphylococcaceae</taxon>
        <taxon>Staphylococcus</taxon>
    </lineage>
</organism>
<keyword id="KW-0963">Cytoplasm</keyword>
<keyword id="KW-1015">Disulfide bond</keyword>
<keyword id="KW-0274">FAD</keyword>
<keyword id="KW-0285">Flavoprotein</keyword>
<keyword id="KW-0472">Membrane</keyword>
<keyword id="KW-0520">NAD</keyword>
<keyword id="KW-0560">Oxidoreductase</keyword>
<keyword id="KW-0676">Redox-active center</keyword>
<accession>P0A0E8</accession>
<accession>Q59822</accession>
<reference key="1">
    <citation type="journal article" date="1991" name="Biochim. Biophys. Acta">
        <title>Lipoamide dehydrogenase of Staphylococcus aureus: nucleotide sequence and sequence analysis.</title>
        <authorList>
            <person name="Hemila H."/>
        </authorList>
    </citation>
    <scope>NUCLEOTIDE SEQUENCE [GENOMIC DNA]</scope>
    <source>
        <strain>ATCC 27733 / V8</strain>
    </source>
</reference>
<gene>
    <name type="primary">pdhD</name>
</gene>
<evidence type="ECO:0000250" key="1"/>
<evidence type="ECO:0000305" key="2"/>
<comment type="function">
    <text evidence="1">Lipoamide dehydrogenase is a component of the alpha-ketoacid dehydrogenase complexes.</text>
</comment>
<comment type="catalytic activity">
    <reaction>
        <text>N(6)-[(R)-dihydrolipoyl]-L-lysyl-[protein] + NAD(+) = N(6)-[(R)-lipoyl]-L-lysyl-[protein] + NADH + H(+)</text>
        <dbReference type="Rhea" id="RHEA:15045"/>
        <dbReference type="Rhea" id="RHEA-COMP:10474"/>
        <dbReference type="Rhea" id="RHEA-COMP:10475"/>
        <dbReference type="ChEBI" id="CHEBI:15378"/>
        <dbReference type="ChEBI" id="CHEBI:57540"/>
        <dbReference type="ChEBI" id="CHEBI:57945"/>
        <dbReference type="ChEBI" id="CHEBI:83099"/>
        <dbReference type="ChEBI" id="CHEBI:83100"/>
        <dbReference type="EC" id="1.8.1.4"/>
    </reaction>
</comment>
<comment type="cofactor">
    <cofactor evidence="1">
        <name>FAD</name>
        <dbReference type="ChEBI" id="CHEBI:57692"/>
    </cofactor>
    <text evidence="1">Binds 1 FAD per subunit.</text>
</comment>
<comment type="subunit">
    <text evidence="1">Homodimer.</text>
</comment>
<comment type="subcellular location">
    <subcellularLocation>
        <location evidence="2">Cytoplasm</location>
    </subcellularLocation>
    <subcellularLocation>
        <location>Membrane</location>
        <topology>Peripheral membrane protein</topology>
    </subcellularLocation>
</comment>
<comment type="miscellaneous">
    <text>The active site is a redox-active disulfide bond.</text>
</comment>
<comment type="similarity">
    <text evidence="2">Belongs to the class-I pyridine nucleotide-disulfide oxidoreductase family.</text>
</comment>
<sequence>MVVGDFPIETDTIVIGAGPGGYVAAIRAAQLGQKVTIVEKGNLGGVCLNVGCIPSKALLHASHRFVEAQHSENLGVIAESVSLNFQKVQEFKSSVVNKLTGGVEGLLKGNKVNIVKGEAYFVDNNSLRVMDEKSAQTYNFKNAIIATGSRPIEIPNFKFGKRVIDSTGALNLQEVPGKLVVVGGGYIGSELGTAFANFGSEVTILEGAKDILGGFEKQMTQPVKKGMKEKGVEIVTEAMAKSAEETDNGVKVTYEAKGEEKTIEADYVLVTVGRRPNTDELGLEELGVKFADRGLLEVDKQSRTSISNIYAIGDIVPGLPLAHKASYEAKVAAEAIDGQAAEVDYIGMPAVCFTEPELATVGYSEAQAKEEGLAIKASKFPYAANGRALSLDDTNGFVKLITLKEDDTLIGAQVVGTGASDIISELGLAIEAGMNAEDIALTIHAHPTLGEMTMEAAEKAIGYPIHTM</sequence>
<name>DLDH_STAAU</name>